<evidence type="ECO:0000250" key="1"/>
<evidence type="ECO:0000255" key="2"/>
<evidence type="ECO:0000255" key="3">
    <source>
        <dbReference type="PROSITE-ProRule" id="PRU00995"/>
    </source>
</evidence>
<evidence type="ECO:0000255" key="4">
    <source>
        <dbReference type="PROSITE-ProRule" id="PRU01384"/>
    </source>
</evidence>
<evidence type="ECO:0000305" key="5"/>
<keyword id="KW-0025">Alternative splicing</keyword>
<keyword id="KW-0067">ATP-binding</keyword>
<keyword id="KW-0238">DNA-binding</keyword>
<keyword id="KW-0413">Isomerase</keyword>
<keyword id="KW-0460">Magnesium</keyword>
<keyword id="KW-0479">Metal-binding</keyword>
<keyword id="KW-0496">Mitochondrion</keyword>
<keyword id="KW-0547">Nucleotide-binding</keyword>
<keyword id="KW-1185">Reference proteome</keyword>
<keyword id="KW-0799">Topoisomerase</keyword>
<keyword id="KW-0809">Transit peptide</keyword>
<name>TOP2M_CAEEL</name>
<proteinExistence type="inferred from homology"/>
<organism>
    <name type="scientific">Caenorhabditis elegans</name>
    <dbReference type="NCBI Taxonomy" id="6239"/>
    <lineage>
        <taxon>Eukaryota</taxon>
        <taxon>Metazoa</taxon>
        <taxon>Ecdysozoa</taxon>
        <taxon>Nematoda</taxon>
        <taxon>Chromadorea</taxon>
        <taxon>Rhabditida</taxon>
        <taxon>Rhabditina</taxon>
        <taxon>Rhabditomorpha</taxon>
        <taxon>Rhabditoidea</taxon>
        <taxon>Rhabditidae</taxon>
        <taxon>Peloderinae</taxon>
        <taxon>Caenorhabditis</taxon>
    </lineage>
</organism>
<gene>
    <name type="ORF">R05D3.12</name>
</gene>
<comment type="function">
    <text evidence="1">Control of topological states of DNA by transient breakage and subsequent rejoining of DNA strands. Topoisomerase II makes double-strand breaks (By similarity).</text>
</comment>
<comment type="catalytic activity">
    <reaction evidence="3">
        <text>ATP-dependent breakage, passage and rejoining of double-stranded DNA.</text>
        <dbReference type="EC" id="5.6.2.2"/>
    </reaction>
</comment>
<comment type="cofactor">
    <cofactor evidence="3">
        <name>Mg(2+)</name>
        <dbReference type="ChEBI" id="CHEBI:18420"/>
    </cofactor>
    <cofactor evidence="3">
        <name>Mn(2+)</name>
        <dbReference type="ChEBI" id="CHEBI:29035"/>
    </cofactor>
    <cofactor evidence="3">
        <name>Ca(2+)</name>
        <dbReference type="ChEBI" id="CHEBI:29108"/>
    </cofactor>
    <text evidence="3">Binds two Mg(2+) per subunit. The magnesium ions form salt bridges with both the protein and the DNA. Can also accept other divalent metal cations, such as Mn(2+) or Ca(2+).</text>
</comment>
<comment type="subunit">
    <text evidence="1">Homodimer.</text>
</comment>
<comment type="subcellular location">
    <subcellularLocation>
        <location evidence="1">Mitochondrion</location>
    </subcellularLocation>
</comment>
<comment type="alternative products">
    <event type="alternative splicing"/>
    <isoform>
        <id>P34534-1</id>
        <name>a</name>
        <sequence type="displayed"/>
    </isoform>
    <isoform>
        <id>P34534-2</id>
        <name>b</name>
        <sequence type="described" ref="VSP_042233"/>
    </isoform>
    <isoform>
        <id>P34534-3</id>
        <name>c</name>
        <sequence type="described" ref="VSP_042232"/>
    </isoform>
</comment>
<comment type="similarity">
    <text evidence="5">Belongs to the type II topoisomerase family.</text>
</comment>
<sequence length="1170" mass="133720">MHRLRVLRHLKFCISTSHRTTVVLKNTRSFCNNIPSTSFASEAAAKYEKKSPTEHVLLRPDTYIGGVAMREDQIIWLRDSENRKMIAKEVTYPPGLLKIFDEILVNAADNKARDSSMNRLEVWLDRETARISVWNNGSGLPVEIHPTEGIYVPTLVFGNLFTSSNYDDSEIKTVGGRNGYGAKLCNIFSKEFIVETVDTRIKRRFRQKWYDNMKKCNEAEVVEILDETVKDYTKVEFVPDLERFQIDKLSDDVIDLIGRRVFEVAATLPRDVDVYLNGQKCDVDGFEDYVKMFNDSSSLLFLHPTPRWHVGVAKRNNFFGESHVVLPKIVSFVNNINTEKGGSHVDYVMDKIVNIIKPIVDSKLGDPTKSVKPAVIKNNLSIFINCLIENPSFESQTKETLTTKAKNFGSIFECDAKKTAEWAEQSGLIEDIVEEVLNMKKKKLPGKRVSVSSVRDIVKLEDAEWAGITGTAEKCTLILTEGDSAKALALAGLEVLGRETYGVFPLKGKLLNVSNLDDARASKNEEISNLLRILGLKFEDSNSITRESLRYGRLLILADQDEDGSHIKGLIVNFIHKFWPSLVHTDGFIQSFRTPLLKAKKGDKVRSFFSMNEYRKWADVEEGGKWKIKYYKGLGTSTSNEAREYFSDLDHHTVNFKYTGTTDDDAIRMAFDRDKSDERKEWIRRSENEITNEDDGKTEISYQEFVDGQLMQFGMVDLKRSIPSLIDGLKPSQRKILWTLLNNMDESTEIKVSQLAGAVAHRQSYHHGEESLVRTIIRMGQTFCGSSNLPLLQPIGQFGTRHEGGNDAASARYIFTALAPTTRLLFPQADDDLLQKNVEEGMVVEPTWLCPIVPLILINGTEGIGTGWSTKIANRNPIDIIDMIRRKIDSISTEYEIPPFYEEFRGKLEVVTPTKFISSGKIQLIRPERKNASTFSIEIVELPIGIWTSKYKEKLSKIVETLPVLEFSERHTEKRVHFRITLDRKKSSRFLQKSNSDLLNYFKLRTSLTENRVLFDRNGELKEFGNISEIAAEFFEVRRDLYEKRLKIQKEECEAKLIYVENQLNFIEMVTNGTIEIRSMGRNQLEEKLQEMGFRVDPMATIAKNSKKANYGYLLEMPVSRLTSDEMKRLEERKSRRRTELEAAESADWKSVWRSELDKLAEAVGNNRKS</sequence>
<dbReference type="EC" id="5.6.2.2" evidence="3"/>
<dbReference type="EMBL" id="FO081667">
    <property type="protein sequence ID" value="CCD73199.1"/>
    <property type="molecule type" value="Genomic_DNA"/>
</dbReference>
<dbReference type="EMBL" id="FO081667">
    <property type="protein sequence ID" value="CCD73187.1"/>
    <property type="molecule type" value="Genomic_DNA"/>
</dbReference>
<dbReference type="EMBL" id="FO081667">
    <property type="protein sequence ID" value="CCD73195.1"/>
    <property type="molecule type" value="Genomic_DNA"/>
</dbReference>
<dbReference type="RefSeq" id="NP_001129839.2">
    <property type="nucleotide sequence ID" value="NM_001136367.2"/>
</dbReference>
<dbReference type="RefSeq" id="NP_001254958.1">
    <molecule id="P34534-3"/>
    <property type="nucleotide sequence ID" value="NM_001268029.3"/>
</dbReference>
<dbReference type="RefSeq" id="NP_741252.2">
    <molecule id="P34534-1"/>
    <property type="nucleotide sequence ID" value="NM_171214.7"/>
</dbReference>
<dbReference type="SMR" id="P34534"/>
<dbReference type="FunCoup" id="P34534">
    <property type="interactions" value="99"/>
</dbReference>
<dbReference type="STRING" id="6239.R05D3.12a.1"/>
<dbReference type="PaxDb" id="6239-R05D3.12a"/>
<dbReference type="PeptideAtlas" id="P34534"/>
<dbReference type="EnsemblMetazoa" id="R05D3.12a.1">
    <molecule id="P34534-1"/>
    <property type="protein sequence ID" value="R05D3.12a.1"/>
    <property type="gene ID" value="WBGene00019884"/>
</dbReference>
<dbReference type="EnsemblMetazoa" id="R05D3.12b.1">
    <property type="protein sequence ID" value="R05D3.12b.1"/>
    <property type="gene ID" value="WBGene00019884"/>
</dbReference>
<dbReference type="EnsemblMetazoa" id="R05D3.12c.1">
    <molecule id="P34534-3"/>
    <property type="protein sequence ID" value="R05D3.12c.1"/>
    <property type="gene ID" value="WBGene00019884"/>
</dbReference>
<dbReference type="GeneID" id="259522"/>
<dbReference type="KEGG" id="cel:CELE_R05D3.12"/>
<dbReference type="UCSC" id="R05D3.1">
    <molecule id="P34534-1"/>
    <property type="organism name" value="c. elegans"/>
</dbReference>
<dbReference type="UCSC" id="R05D3.12">
    <property type="organism name" value="c. elegans"/>
</dbReference>
<dbReference type="AGR" id="WB:WBGene00019884"/>
<dbReference type="CTD" id="259522"/>
<dbReference type="WormBase" id="R05D3.12a">
    <molecule id="P34534-1"/>
    <property type="protein sequence ID" value="CE45903"/>
    <property type="gene ID" value="WBGene00019884"/>
</dbReference>
<dbReference type="WormBase" id="R05D3.12b">
    <property type="protein sequence ID" value="CE31048"/>
    <property type="gene ID" value="WBGene00019884"/>
</dbReference>
<dbReference type="WormBase" id="R05D3.12c">
    <molecule id="P34534-3"/>
    <property type="protein sequence ID" value="CE42620"/>
    <property type="gene ID" value="WBGene00019884"/>
</dbReference>
<dbReference type="eggNOG" id="KOG0355">
    <property type="taxonomic scope" value="Eukaryota"/>
</dbReference>
<dbReference type="HOGENOM" id="CLU_001935_1_0_1"/>
<dbReference type="InParanoid" id="P34534"/>
<dbReference type="OMA" id="AFESLWP"/>
<dbReference type="OrthoDB" id="276498at2759"/>
<dbReference type="PhylomeDB" id="P34534"/>
<dbReference type="Reactome" id="R-CEL-4615885">
    <property type="pathway name" value="SUMOylation of DNA replication proteins"/>
</dbReference>
<dbReference type="PRO" id="PR:P34534"/>
<dbReference type="Proteomes" id="UP000001940">
    <property type="component" value="Chromosome III"/>
</dbReference>
<dbReference type="Bgee" id="WBGene00019884">
    <property type="expression patterns" value="Expressed in germ line (C elegans) and 4 other cell types or tissues"/>
</dbReference>
<dbReference type="ExpressionAtlas" id="P34534">
    <property type="expression patterns" value="baseline and differential"/>
</dbReference>
<dbReference type="GO" id="GO:0005739">
    <property type="term" value="C:mitochondrion"/>
    <property type="evidence" value="ECO:0007669"/>
    <property type="project" value="UniProtKB-SubCell"/>
</dbReference>
<dbReference type="GO" id="GO:0005634">
    <property type="term" value="C:nucleus"/>
    <property type="evidence" value="ECO:0000318"/>
    <property type="project" value="GO_Central"/>
</dbReference>
<dbReference type="GO" id="GO:0005524">
    <property type="term" value="F:ATP binding"/>
    <property type="evidence" value="ECO:0007669"/>
    <property type="project" value="UniProtKB-KW"/>
</dbReference>
<dbReference type="GO" id="GO:0003677">
    <property type="term" value="F:DNA binding"/>
    <property type="evidence" value="ECO:0007669"/>
    <property type="project" value="UniProtKB-KW"/>
</dbReference>
<dbReference type="GO" id="GO:0003918">
    <property type="term" value="F:DNA topoisomerase type II (double strand cut, ATP-hydrolyzing) activity"/>
    <property type="evidence" value="ECO:0007669"/>
    <property type="project" value="UniProtKB-EC"/>
</dbReference>
<dbReference type="GO" id="GO:0046872">
    <property type="term" value="F:metal ion binding"/>
    <property type="evidence" value="ECO:0007669"/>
    <property type="project" value="UniProtKB-KW"/>
</dbReference>
<dbReference type="GO" id="GO:0006265">
    <property type="term" value="P:DNA topological change"/>
    <property type="evidence" value="ECO:0007669"/>
    <property type="project" value="InterPro"/>
</dbReference>
<dbReference type="GO" id="GO:0000712">
    <property type="term" value="P:resolution of meiotic recombination intermediates"/>
    <property type="evidence" value="ECO:0000318"/>
    <property type="project" value="GO_Central"/>
</dbReference>
<dbReference type="GO" id="GO:0000819">
    <property type="term" value="P:sister chromatid segregation"/>
    <property type="evidence" value="ECO:0000318"/>
    <property type="project" value="GO_Central"/>
</dbReference>
<dbReference type="CDD" id="cd16930">
    <property type="entry name" value="HATPase_TopII-like"/>
    <property type="match status" value="1"/>
</dbReference>
<dbReference type="CDD" id="cd00187">
    <property type="entry name" value="TOP4c"/>
    <property type="match status" value="1"/>
</dbReference>
<dbReference type="CDD" id="cd03481">
    <property type="entry name" value="TopoIIA_Trans_ScTopoIIA"/>
    <property type="match status" value="1"/>
</dbReference>
<dbReference type="CDD" id="cd03365">
    <property type="entry name" value="TOPRIM_TopoIIA"/>
    <property type="match status" value="1"/>
</dbReference>
<dbReference type="FunFam" id="3.30.1360.40:FF:000030">
    <property type="entry name" value="DNA topoisomerase 2"/>
    <property type="match status" value="1"/>
</dbReference>
<dbReference type="FunFam" id="3.30.1490.30:FF:000001">
    <property type="entry name" value="DNA topoisomerase 2"/>
    <property type="match status" value="1"/>
</dbReference>
<dbReference type="FunFam" id="3.30.565.10:FF:000097">
    <property type="entry name" value="DNA topoisomerase 2"/>
    <property type="match status" value="1"/>
</dbReference>
<dbReference type="FunFam" id="3.40.50.670:FF:000001">
    <property type="entry name" value="DNA topoisomerase 2"/>
    <property type="match status" value="2"/>
</dbReference>
<dbReference type="FunFam" id="3.90.199.10:FF:000002">
    <property type="entry name" value="DNA topoisomerase 2"/>
    <property type="match status" value="1"/>
</dbReference>
<dbReference type="Gene3D" id="3.30.1360.40">
    <property type="match status" value="1"/>
</dbReference>
<dbReference type="Gene3D" id="3.30.1490.30">
    <property type="match status" value="1"/>
</dbReference>
<dbReference type="Gene3D" id="3.30.230.10">
    <property type="match status" value="1"/>
</dbReference>
<dbReference type="Gene3D" id="3.40.50.670">
    <property type="match status" value="1"/>
</dbReference>
<dbReference type="Gene3D" id="3.30.565.10">
    <property type="entry name" value="Histidine kinase-like ATPase, C-terminal domain"/>
    <property type="match status" value="1"/>
</dbReference>
<dbReference type="Gene3D" id="3.90.199.10">
    <property type="entry name" value="Topoisomerase II, domain 5"/>
    <property type="match status" value="1"/>
</dbReference>
<dbReference type="Gene3D" id="1.10.268.10">
    <property type="entry name" value="Topoisomerase, domain 3"/>
    <property type="match status" value="1"/>
</dbReference>
<dbReference type="InterPro" id="IPR050634">
    <property type="entry name" value="DNA_Topoisomerase_II"/>
</dbReference>
<dbReference type="InterPro" id="IPR036890">
    <property type="entry name" value="HATPase_C_sf"/>
</dbReference>
<dbReference type="InterPro" id="IPR020568">
    <property type="entry name" value="Ribosomal_Su5_D2-typ_SF"/>
</dbReference>
<dbReference type="InterPro" id="IPR014721">
    <property type="entry name" value="Ribsml_uS5_D2-typ_fold_subgr"/>
</dbReference>
<dbReference type="InterPro" id="IPR001241">
    <property type="entry name" value="Topo_IIA"/>
</dbReference>
<dbReference type="InterPro" id="IPR013760">
    <property type="entry name" value="Topo_IIA-like_dom_sf"/>
</dbReference>
<dbReference type="InterPro" id="IPR013758">
    <property type="entry name" value="Topo_IIA_A/C_ab"/>
</dbReference>
<dbReference type="InterPro" id="IPR013757">
    <property type="entry name" value="Topo_IIA_A_a_sf"/>
</dbReference>
<dbReference type="InterPro" id="IPR013759">
    <property type="entry name" value="Topo_IIA_B_C"/>
</dbReference>
<dbReference type="InterPro" id="IPR013506">
    <property type="entry name" value="Topo_IIA_bsu_dom2"/>
</dbReference>
<dbReference type="InterPro" id="IPR002205">
    <property type="entry name" value="Topo_IIA_dom_A"/>
</dbReference>
<dbReference type="InterPro" id="IPR001154">
    <property type="entry name" value="TopoII_euk"/>
</dbReference>
<dbReference type="InterPro" id="IPR018522">
    <property type="entry name" value="TopoIIA_CS"/>
</dbReference>
<dbReference type="InterPro" id="IPR031660">
    <property type="entry name" value="TOPRIM_C"/>
</dbReference>
<dbReference type="InterPro" id="IPR006171">
    <property type="entry name" value="TOPRIM_dom"/>
</dbReference>
<dbReference type="InterPro" id="IPR034157">
    <property type="entry name" value="TOPRIM_TopoII"/>
</dbReference>
<dbReference type="PANTHER" id="PTHR10169:SF38">
    <property type="entry name" value="DNA TOPOISOMERASE 2"/>
    <property type="match status" value="1"/>
</dbReference>
<dbReference type="PANTHER" id="PTHR10169">
    <property type="entry name" value="DNA TOPOISOMERASE/GYRASE"/>
    <property type="match status" value="1"/>
</dbReference>
<dbReference type="Pfam" id="PF00204">
    <property type="entry name" value="DNA_gyraseB"/>
    <property type="match status" value="1"/>
</dbReference>
<dbReference type="Pfam" id="PF00521">
    <property type="entry name" value="DNA_topoisoIV"/>
    <property type="match status" value="1"/>
</dbReference>
<dbReference type="Pfam" id="PF02518">
    <property type="entry name" value="HATPase_c"/>
    <property type="match status" value="1"/>
</dbReference>
<dbReference type="Pfam" id="PF01751">
    <property type="entry name" value="Toprim"/>
    <property type="match status" value="1"/>
</dbReference>
<dbReference type="Pfam" id="PF16898">
    <property type="entry name" value="TOPRIM_C"/>
    <property type="match status" value="1"/>
</dbReference>
<dbReference type="PRINTS" id="PR01158">
    <property type="entry name" value="TOPISMRASEII"/>
</dbReference>
<dbReference type="PRINTS" id="PR00418">
    <property type="entry name" value="TPI2FAMILY"/>
</dbReference>
<dbReference type="SMART" id="SM00433">
    <property type="entry name" value="TOP2c"/>
    <property type="match status" value="1"/>
</dbReference>
<dbReference type="SMART" id="SM00434">
    <property type="entry name" value="TOP4c"/>
    <property type="match status" value="1"/>
</dbReference>
<dbReference type="SUPFAM" id="SSF55874">
    <property type="entry name" value="ATPase domain of HSP90 chaperone/DNA topoisomerase II/histidine kinase"/>
    <property type="match status" value="1"/>
</dbReference>
<dbReference type="SUPFAM" id="SSF54211">
    <property type="entry name" value="Ribosomal protein S5 domain 2-like"/>
    <property type="match status" value="1"/>
</dbReference>
<dbReference type="SUPFAM" id="SSF56719">
    <property type="entry name" value="Type II DNA topoisomerase"/>
    <property type="match status" value="1"/>
</dbReference>
<dbReference type="PROSITE" id="PS52040">
    <property type="entry name" value="TOPO_IIA"/>
    <property type="match status" value="1"/>
</dbReference>
<dbReference type="PROSITE" id="PS00177">
    <property type="entry name" value="TOPOISOMERASE_II"/>
    <property type="match status" value="1"/>
</dbReference>
<dbReference type="PROSITE" id="PS50880">
    <property type="entry name" value="TOPRIM"/>
    <property type="match status" value="1"/>
</dbReference>
<reference key="1">
    <citation type="journal article" date="1994" name="Nature">
        <title>2.2 Mb of contiguous nucleotide sequence from chromosome III of C. elegans.</title>
        <authorList>
            <person name="Wilson R."/>
            <person name="Ainscough R."/>
            <person name="Anderson K."/>
            <person name="Baynes C."/>
            <person name="Berks M."/>
            <person name="Bonfield J."/>
            <person name="Burton J."/>
            <person name="Connell M."/>
            <person name="Copsey T."/>
            <person name="Cooper J."/>
            <person name="Coulson A."/>
            <person name="Craxton M."/>
            <person name="Dear S."/>
            <person name="Du Z."/>
            <person name="Durbin R."/>
            <person name="Favello A."/>
            <person name="Fraser A."/>
            <person name="Fulton L."/>
            <person name="Gardner A."/>
            <person name="Green P."/>
            <person name="Hawkins T."/>
            <person name="Hillier L."/>
            <person name="Jier M."/>
            <person name="Johnston L."/>
            <person name="Jones M."/>
            <person name="Kershaw J."/>
            <person name="Kirsten J."/>
            <person name="Laisster N."/>
            <person name="Latreille P."/>
            <person name="Lightning J."/>
            <person name="Lloyd C."/>
            <person name="Mortimore B."/>
            <person name="O'Callaghan M."/>
            <person name="Parsons J."/>
            <person name="Percy C."/>
            <person name="Rifken L."/>
            <person name="Roopra A."/>
            <person name="Saunders D."/>
            <person name="Shownkeen R."/>
            <person name="Sims M."/>
            <person name="Smaldon N."/>
            <person name="Smith A."/>
            <person name="Smith M."/>
            <person name="Sonnhammer E."/>
            <person name="Staden R."/>
            <person name="Sulston J."/>
            <person name="Thierry-Mieg J."/>
            <person name="Thomas K."/>
            <person name="Vaudin M."/>
            <person name="Vaughan K."/>
            <person name="Waterston R."/>
            <person name="Watson A."/>
            <person name="Weinstock L."/>
            <person name="Wilkinson-Sproat J."/>
            <person name="Wohldman P."/>
        </authorList>
    </citation>
    <scope>NUCLEOTIDE SEQUENCE [LARGE SCALE GENOMIC DNA]</scope>
    <scope>ALTERNATIVE SPLICING</scope>
    <source>
        <strain>Bristol N2</strain>
    </source>
</reference>
<reference key="2">
    <citation type="journal article" date="1998" name="Science">
        <title>Genome sequence of the nematode C. elegans: a platform for investigating biology.</title>
        <authorList>
            <consortium name="The C. elegans sequencing consortium"/>
        </authorList>
    </citation>
    <scope>NUCLEOTIDE SEQUENCE [LARGE SCALE GENOMIC DNA]</scope>
    <scope>ALTERNATIVE SPLICING</scope>
    <source>
        <strain>Bristol N2</strain>
    </source>
</reference>
<accession>P34534</accession>
<accession>Q8MQ00</accession>
<feature type="transit peptide" description="Mitochondrion" evidence="2">
    <location>
        <begin position="1"/>
        <end status="unknown"/>
    </location>
</feature>
<feature type="chain" id="PRO_0000034819" description="Putative DNA topoisomerase 2, mitochondrial">
    <location>
        <begin status="unknown"/>
        <end position="1170"/>
    </location>
</feature>
<feature type="domain" description="Toprim" evidence="3">
    <location>
        <begin position="475"/>
        <end position="590"/>
    </location>
</feature>
<feature type="domain" description="Topo IIA-type catalytic" evidence="4">
    <location>
        <begin position="722"/>
        <end position="1157"/>
    </location>
</feature>
<feature type="active site" description="O-(5'-phospho-DNA)-tyrosine intermediate" evidence="4">
    <location>
        <position position="813"/>
    </location>
</feature>
<feature type="binding site" evidence="1">
    <location>
        <position position="106"/>
    </location>
    <ligand>
        <name>ATP</name>
        <dbReference type="ChEBI" id="CHEBI:30616"/>
    </ligand>
</feature>
<feature type="binding site" evidence="1">
    <location>
        <position position="135"/>
    </location>
    <ligand>
        <name>ATP</name>
        <dbReference type="ChEBI" id="CHEBI:30616"/>
    </ligand>
</feature>
<feature type="binding site" evidence="1">
    <location>
        <begin position="163"/>
        <end position="165"/>
    </location>
    <ligand>
        <name>ATP</name>
        <dbReference type="ChEBI" id="CHEBI:30616"/>
    </ligand>
</feature>
<feature type="binding site" evidence="1">
    <location>
        <begin position="176"/>
        <end position="183"/>
    </location>
    <ligand>
        <name>ATP</name>
        <dbReference type="ChEBI" id="CHEBI:30616"/>
    </ligand>
</feature>
<feature type="binding site" evidence="1">
    <location>
        <begin position="396"/>
        <end position="398"/>
    </location>
    <ligand>
        <name>ATP</name>
        <dbReference type="ChEBI" id="CHEBI:30616"/>
    </ligand>
</feature>
<feature type="binding site" evidence="3">
    <location>
        <position position="481"/>
    </location>
    <ligand>
        <name>Mg(2+)</name>
        <dbReference type="ChEBI" id="CHEBI:18420"/>
        <label>1</label>
        <note>catalytic</note>
    </ligand>
</feature>
<feature type="binding site" evidence="3">
    <location>
        <position position="559"/>
    </location>
    <ligand>
        <name>Mg(2+)</name>
        <dbReference type="ChEBI" id="CHEBI:18420"/>
        <label>1</label>
        <note>catalytic</note>
    </ligand>
</feature>
<feature type="binding site" evidence="3">
    <location>
        <position position="559"/>
    </location>
    <ligand>
        <name>Mg(2+)</name>
        <dbReference type="ChEBI" id="CHEBI:18420"/>
        <label>2</label>
    </ligand>
</feature>
<feature type="binding site" evidence="3">
    <location>
        <position position="561"/>
    </location>
    <ligand>
        <name>Mg(2+)</name>
        <dbReference type="ChEBI" id="CHEBI:18420"/>
        <label>2</label>
    </ligand>
</feature>
<feature type="site" description="Interaction with DNA" evidence="3">
    <location>
        <position position="509"/>
    </location>
</feature>
<feature type="site" description="Interaction with DNA" evidence="3">
    <location>
        <position position="512"/>
    </location>
</feature>
<feature type="site" description="Interaction with DNA" evidence="3">
    <location>
        <position position="679"/>
    </location>
</feature>
<feature type="site" description="Interaction with DNA" evidence="3">
    <location>
        <position position="680"/>
    </location>
</feature>
<feature type="site" description="Interaction with DNA" evidence="3">
    <location>
        <position position="730"/>
    </location>
</feature>
<feature type="site" description="Interaction with DNA" evidence="3">
    <location>
        <position position="765"/>
    </location>
</feature>
<feature type="site" description="Interaction with DNA" evidence="3">
    <location>
        <position position="771"/>
    </location>
</feature>
<feature type="site" description="Transition state stabilizer" evidence="1">
    <location>
        <position position="812"/>
    </location>
</feature>
<feature type="site" description="Important for DNA bending; intercalates between base pairs of target DNA" evidence="1">
    <location>
        <position position="864"/>
    </location>
</feature>
<feature type="splice variant" id="VSP_042232" description="In isoform c." evidence="5">
    <location>
        <begin position="127"/>
        <end position="1170"/>
    </location>
</feature>
<feature type="splice variant" id="VSP_042233" description="In isoform b." evidence="5">
    <location>
        <begin position="145"/>
        <end position="1170"/>
    </location>
</feature>
<protein>
    <recommendedName>
        <fullName>Putative DNA topoisomerase 2, mitochondrial</fullName>
        <shortName>DNA topoisomerase II</shortName>
        <ecNumber evidence="3">5.6.2.2</ecNumber>
    </recommendedName>
</protein>